<gene>
    <name evidence="1" type="primary">rpsJ</name>
    <name type="ordered locus">RrIowa_1198</name>
</gene>
<proteinExistence type="inferred from homology"/>
<accession>B0BUR1</accession>
<feature type="chain" id="PRO_1000081562" description="Small ribosomal subunit protein uS10">
    <location>
        <begin position="1"/>
        <end position="105"/>
    </location>
</feature>
<dbReference type="EMBL" id="CP000766">
    <property type="protein sequence ID" value="ABY72971.1"/>
    <property type="molecule type" value="Genomic_DNA"/>
</dbReference>
<dbReference type="RefSeq" id="WP_012151153.1">
    <property type="nucleotide sequence ID" value="NC_010263.3"/>
</dbReference>
<dbReference type="SMR" id="B0BUR1"/>
<dbReference type="GeneID" id="79937671"/>
<dbReference type="KEGG" id="rrj:RrIowa_1198"/>
<dbReference type="eggNOG" id="COG0051">
    <property type="taxonomic scope" value="Bacteria"/>
</dbReference>
<dbReference type="HOGENOM" id="CLU_122625_1_3_5"/>
<dbReference type="Proteomes" id="UP000000796">
    <property type="component" value="Chromosome"/>
</dbReference>
<dbReference type="GO" id="GO:1990904">
    <property type="term" value="C:ribonucleoprotein complex"/>
    <property type="evidence" value="ECO:0007669"/>
    <property type="project" value="UniProtKB-KW"/>
</dbReference>
<dbReference type="GO" id="GO:0005840">
    <property type="term" value="C:ribosome"/>
    <property type="evidence" value="ECO:0007669"/>
    <property type="project" value="UniProtKB-KW"/>
</dbReference>
<dbReference type="GO" id="GO:0003735">
    <property type="term" value="F:structural constituent of ribosome"/>
    <property type="evidence" value="ECO:0007669"/>
    <property type="project" value="InterPro"/>
</dbReference>
<dbReference type="GO" id="GO:0000049">
    <property type="term" value="F:tRNA binding"/>
    <property type="evidence" value="ECO:0007669"/>
    <property type="project" value="UniProtKB-UniRule"/>
</dbReference>
<dbReference type="GO" id="GO:0006412">
    <property type="term" value="P:translation"/>
    <property type="evidence" value="ECO:0007669"/>
    <property type="project" value="UniProtKB-UniRule"/>
</dbReference>
<dbReference type="FunFam" id="3.30.70.600:FF:000003">
    <property type="entry name" value="30S ribosomal protein S10"/>
    <property type="match status" value="1"/>
</dbReference>
<dbReference type="Gene3D" id="3.30.70.600">
    <property type="entry name" value="Ribosomal protein S10 domain"/>
    <property type="match status" value="1"/>
</dbReference>
<dbReference type="HAMAP" id="MF_00508">
    <property type="entry name" value="Ribosomal_uS10"/>
    <property type="match status" value="1"/>
</dbReference>
<dbReference type="InterPro" id="IPR001848">
    <property type="entry name" value="Ribosomal_uS10"/>
</dbReference>
<dbReference type="InterPro" id="IPR027486">
    <property type="entry name" value="Ribosomal_uS10_dom"/>
</dbReference>
<dbReference type="InterPro" id="IPR036838">
    <property type="entry name" value="Ribosomal_uS10_dom_sf"/>
</dbReference>
<dbReference type="NCBIfam" id="NF001861">
    <property type="entry name" value="PRK00596.1"/>
    <property type="match status" value="1"/>
</dbReference>
<dbReference type="NCBIfam" id="TIGR01049">
    <property type="entry name" value="rpsJ_bact"/>
    <property type="match status" value="1"/>
</dbReference>
<dbReference type="PANTHER" id="PTHR11700">
    <property type="entry name" value="30S RIBOSOMAL PROTEIN S10 FAMILY MEMBER"/>
    <property type="match status" value="1"/>
</dbReference>
<dbReference type="Pfam" id="PF00338">
    <property type="entry name" value="Ribosomal_S10"/>
    <property type="match status" value="1"/>
</dbReference>
<dbReference type="PRINTS" id="PR00971">
    <property type="entry name" value="RIBOSOMALS10"/>
</dbReference>
<dbReference type="SMART" id="SM01403">
    <property type="entry name" value="Ribosomal_S10"/>
    <property type="match status" value="1"/>
</dbReference>
<dbReference type="SUPFAM" id="SSF54999">
    <property type="entry name" value="Ribosomal protein S10"/>
    <property type="match status" value="1"/>
</dbReference>
<comment type="function">
    <text evidence="1">Involved in the binding of tRNA to the ribosomes.</text>
</comment>
<comment type="subunit">
    <text evidence="1">Part of the 30S ribosomal subunit.</text>
</comment>
<comment type="similarity">
    <text evidence="1">Belongs to the universal ribosomal protein uS10 family.</text>
</comment>
<evidence type="ECO:0000255" key="1">
    <source>
        <dbReference type="HAMAP-Rule" id="MF_00508"/>
    </source>
</evidence>
<evidence type="ECO:0000305" key="2"/>
<organism>
    <name type="scientific">Rickettsia rickettsii (strain Iowa)</name>
    <dbReference type="NCBI Taxonomy" id="452659"/>
    <lineage>
        <taxon>Bacteria</taxon>
        <taxon>Pseudomonadati</taxon>
        <taxon>Pseudomonadota</taxon>
        <taxon>Alphaproteobacteria</taxon>
        <taxon>Rickettsiales</taxon>
        <taxon>Rickettsiaceae</taxon>
        <taxon>Rickettsieae</taxon>
        <taxon>Rickettsia</taxon>
        <taxon>spotted fever group</taxon>
    </lineage>
</organism>
<keyword id="KW-0687">Ribonucleoprotein</keyword>
<keyword id="KW-0689">Ribosomal protein</keyword>
<reference key="1">
    <citation type="journal article" date="2008" name="Infect. Immun.">
        <title>Genomic comparison of virulent Rickettsia rickettsii Sheila Smith and avirulent Rickettsia rickettsii Iowa.</title>
        <authorList>
            <person name="Ellison D.W."/>
            <person name="Clark T.R."/>
            <person name="Sturdevant D.E."/>
            <person name="Virtaneva K."/>
            <person name="Porcella S.F."/>
            <person name="Hackstadt T."/>
        </authorList>
    </citation>
    <scope>NUCLEOTIDE SEQUENCE [LARGE SCALE GENOMIC DNA]</scope>
    <source>
        <strain>Iowa</strain>
    </source>
</reference>
<name>RS10_RICRO</name>
<sequence>MKNKIKIRLKSFDHRSLDQATKEIVSAVKRTFAKINGPIPLPKKIGRFTVNRSPHVHKKSREQFEIRKHKRLLVIGDPNPAVVDALSKVDLAAGVDVVIELESGE</sequence>
<protein>
    <recommendedName>
        <fullName evidence="1">Small ribosomal subunit protein uS10</fullName>
    </recommendedName>
    <alternativeName>
        <fullName evidence="2">30S ribosomal protein S10</fullName>
    </alternativeName>
</protein>